<accession>P60807</accession>
<dbReference type="EC" id="2.4.2.17" evidence="1"/>
<dbReference type="EMBL" id="BX950229">
    <property type="protein sequence ID" value="CAF30503.1"/>
    <property type="molecule type" value="Genomic_DNA"/>
</dbReference>
<dbReference type="RefSeq" id="WP_011170891.1">
    <property type="nucleotide sequence ID" value="NC_005791.1"/>
</dbReference>
<dbReference type="SMR" id="P60807"/>
<dbReference type="STRING" id="267377.MMP0947"/>
<dbReference type="EnsemblBacteria" id="CAF30503">
    <property type="protein sequence ID" value="CAF30503"/>
    <property type="gene ID" value="MMP0947"/>
</dbReference>
<dbReference type="GeneID" id="41279457"/>
<dbReference type="KEGG" id="mmp:MMP0947"/>
<dbReference type="PATRIC" id="fig|267377.15.peg.975"/>
<dbReference type="eggNOG" id="arCOG02208">
    <property type="taxonomic scope" value="Archaea"/>
</dbReference>
<dbReference type="HOGENOM" id="CLU_038115_1_0_2"/>
<dbReference type="OrthoDB" id="33116at2157"/>
<dbReference type="UniPathway" id="UPA00031">
    <property type="reaction ID" value="UER00006"/>
</dbReference>
<dbReference type="Proteomes" id="UP000000590">
    <property type="component" value="Chromosome"/>
</dbReference>
<dbReference type="GO" id="GO:0005737">
    <property type="term" value="C:cytoplasm"/>
    <property type="evidence" value="ECO:0007669"/>
    <property type="project" value="UniProtKB-SubCell"/>
</dbReference>
<dbReference type="GO" id="GO:0005524">
    <property type="term" value="F:ATP binding"/>
    <property type="evidence" value="ECO:0007669"/>
    <property type="project" value="UniProtKB-KW"/>
</dbReference>
<dbReference type="GO" id="GO:0003879">
    <property type="term" value="F:ATP phosphoribosyltransferase activity"/>
    <property type="evidence" value="ECO:0007669"/>
    <property type="project" value="UniProtKB-UniRule"/>
</dbReference>
<dbReference type="GO" id="GO:0000287">
    <property type="term" value="F:magnesium ion binding"/>
    <property type="evidence" value="ECO:0007669"/>
    <property type="project" value="UniProtKB-UniRule"/>
</dbReference>
<dbReference type="GO" id="GO:0000105">
    <property type="term" value="P:L-histidine biosynthetic process"/>
    <property type="evidence" value="ECO:0007669"/>
    <property type="project" value="UniProtKB-UniRule"/>
</dbReference>
<dbReference type="FunFam" id="3.30.70.120:FF:000002">
    <property type="entry name" value="ATP phosphoribosyltransferase"/>
    <property type="match status" value="1"/>
</dbReference>
<dbReference type="FunFam" id="3.40.190.10:FF:000008">
    <property type="entry name" value="ATP phosphoribosyltransferase"/>
    <property type="match status" value="1"/>
</dbReference>
<dbReference type="Gene3D" id="3.30.70.120">
    <property type="match status" value="1"/>
</dbReference>
<dbReference type="Gene3D" id="3.40.190.10">
    <property type="entry name" value="Periplasmic binding protein-like II"/>
    <property type="match status" value="2"/>
</dbReference>
<dbReference type="HAMAP" id="MF_00079">
    <property type="entry name" value="HisG_Long"/>
    <property type="match status" value="1"/>
</dbReference>
<dbReference type="InterPro" id="IPR020621">
    <property type="entry name" value="ATP-PRT_HisG_long"/>
</dbReference>
<dbReference type="InterPro" id="IPR013820">
    <property type="entry name" value="ATP_PRibTrfase_cat"/>
</dbReference>
<dbReference type="InterPro" id="IPR018198">
    <property type="entry name" value="ATP_PRibTrfase_CS"/>
</dbReference>
<dbReference type="InterPro" id="IPR001348">
    <property type="entry name" value="ATP_PRibTrfase_HisG"/>
</dbReference>
<dbReference type="InterPro" id="IPR013115">
    <property type="entry name" value="HisG_C"/>
</dbReference>
<dbReference type="InterPro" id="IPR011322">
    <property type="entry name" value="N-reg_PII-like_a/b"/>
</dbReference>
<dbReference type="InterPro" id="IPR015867">
    <property type="entry name" value="N-reg_PII/ATP_PRibTrfase_C"/>
</dbReference>
<dbReference type="NCBIfam" id="TIGR00070">
    <property type="entry name" value="hisG"/>
    <property type="match status" value="1"/>
</dbReference>
<dbReference type="NCBIfam" id="TIGR03455">
    <property type="entry name" value="HisG_C-term"/>
    <property type="match status" value="1"/>
</dbReference>
<dbReference type="PANTHER" id="PTHR21403:SF10">
    <property type="entry name" value="ATP PHOSPHORIBOSYLTRANSFERASE"/>
    <property type="match status" value="1"/>
</dbReference>
<dbReference type="PANTHER" id="PTHR21403">
    <property type="entry name" value="ATP PHOSPHORIBOSYLTRANSFERASE ATP-PRTASE"/>
    <property type="match status" value="1"/>
</dbReference>
<dbReference type="Pfam" id="PF01634">
    <property type="entry name" value="HisG"/>
    <property type="match status" value="1"/>
</dbReference>
<dbReference type="Pfam" id="PF08029">
    <property type="entry name" value="HisG_C"/>
    <property type="match status" value="1"/>
</dbReference>
<dbReference type="SUPFAM" id="SSF54913">
    <property type="entry name" value="GlnB-like"/>
    <property type="match status" value="1"/>
</dbReference>
<dbReference type="SUPFAM" id="SSF53850">
    <property type="entry name" value="Periplasmic binding protein-like II"/>
    <property type="match status" value="1"/>
</dbReference>
<dbReference type="PROSITE" id="PS01316">
    <property type="entry name" value="ATP_P_PHORIBOSYLTR"/>
    <property type="match status" value="1"/>
</dbReference>
<evidence type="ECO:0000255" key="1">
    <source>
        <dbReference type="HAMAP-Rule" id="MF_00079"/>
    </source>
</evidence>
<organism>
    <name type="scientific">Methanococcus maripaludis (strain DSM 14266 / JCM 13030 / NBRC 101832 / S2 / LL)</name>
    <dbReference type="NCBI Taxonomy" id="267377"/>
    <lineage>
        <taxon>Archaea</taxon>
        <taxon>Methanobacteriati</taxon>
        <taxon>Methanobacteriota</taxon>
        <taxon>Methanomada group</taxon>
        <taxon>Methanococci</taxon>
        <taxon>Methanococcales</taxon>
        <taxon>Methanococcaceae</taxon>
        <taxon>Methanococcus</taxon>
    </lineage>
</organism>
<comment type="function">
    <text evidence="1">Catalyzes the condensation of ATP and 5-phosphoribose 1-diphosphate to form N'-(5'-phosphoribosyl)-ATP (PR-ATP). Has a crucial role in the pathway because the rate of histidine biosynthesis seems to be controlled primarily by regulation of HisG enzymatic activity.</text>
</comment>
<comment type="catalytic activity">
    <reaction evidence="1">
        <text>1-(5-phospho-beta-D-ribosyl)-ATP + diphosphate = 5-phospho-alpha-D-ribose 1-diphosphate + ATP</text>
        <dbReference type="Rhea" id="RHEA:18473"/>
        <dbReference type="ChEBI" id="CHEBI:30616"/>
        <dbReference type="ChEBI" id="CHEBI:33019"/>
        <dbReference type="ChEBI" id="CHEBI:58017"/>
        <dbReference type="ChEBI" id="CHEBI:73183"/>
        <dbReference type="EC" id="2.4.2.17"/>
    </reaction>
</comment>
<comment type="cofactor">
    <cofactor evidence="1">
        <name>Mg(2+)</name>
        <dbReference type="ChEBI" id="CHEBI:18420"/>
    </cofactor>
</comment>
<comment type="activity regulation">
    <text evidence="1">Feedback inhibited by histidine.</text>
</comment>
<comment type="pathway">
    <text evidence="1">Amino-acid biosynthesis; L-histidine biosynthesis; L-histidine from 5-phospho-alpha-D-ribose 1-diphosphate: step 1/9.</text>
</comment>
<comment type="subcellular location">
    <subcellularLocation>
        <location evidence="1">Cytoplasm</location>
    </subcellularLocation>
</comment>
<comment type="similarity">
    <text evidence="1">Belongs to the ATP phosphoribosyltransferase family. Long subfamily.</text>
</comment>
<sequence>MILLALPNKGRISKPVNEILEKSGLKISVHGRSLFAKTVDPEIKVMFARAKDIPEFVRDGVADVGVTGYDLMLERDTEEELEMLLDFKFGNARLVLAAPENSDVNSIEDVKNGMKIATEFPGLTKRYLEKKGLNLEIIELSGATEIAPFIGVSDLICDLTSTGTTLQLNRLKEIENVVSSSTRLVANKKSMEDPEKSAKINQVLSGIKSVMYAQSKRLIMMNAPKDKVSEITSVIPGMGGPTVSEILSNCNMLAINAVIDENKVFETVSNLEKLGARDILVVPIERIL</sequence>
<reference key="1">
    <citation type="journal article" date="2004" name="J. Bacteriol.">
        <title>Complete genome sequence of the genetically tractable hydrogenotrophic methanogen Methanococcus maripaludis.</title>
        <authorList>
            <person name="Hendrickson E.L."/>
            <person name="Kaul R."/>
            <person name="Zhou Y."/>
            <person name="Bovee D."/>
            <person name="Chapman P."/>
            <person name="Chung J."/>
            <person name="Conway de Macario E."/>
            <person name="Dodsworth J.A."/>
            <person name="Gillett W."/>
            <person name="Graham D.E."/>
            <person name="Hackett M."/>
            <person name="Haydock A.K."/>
            <person name="Kang A."/>
            <person name="Land M.L."/>
            <person name="Levy R."/>
            <person name="Lie T.J."/>
            <person name="Major T.A."/>
            <person name="Moore B.C."/>
            <person name="Porat I."/>
            <person name="Palmeiri A."/>
            <person name="Rouse G."/>
            <person name="Saenphimmachak C."/>
            <person name="Soell D."/>
            <person name="Van Dien S."/>
            <person name="Wang T."/>
            <person name="Whitman W.B."/>
            <person name="Xia Q."/>
            <person name="Zhang Y."/>
            <person name="Larimer F.W."/>
            <person name="Olson M.V."/>
            <person name="Leigh J.A."/>
        </authorList>
    </citation>
    <scope>NUCLEOTIDE SEQUENCE [LARGE SCALE GENOMIC DNA]</scope>
    <source>
        <strain>DSM 14266 / JCM 13030 / NBRC 101832 / S2 / LL</strain>
    </source>
</reference>
<gene>
    <name evidence="1" type="primary">hisG</name>
    <name type="ordered locus">MMP0947</name>
</gene>
<proteinExistence type="inferred from homology"/>
<protein>
    <recommendedName>
        <fullName evidence="1">ATP phosphoribosyltransferase</fullName>
        <shortName evidence="1">ATP-PRT</shortName>
        <shortName evidence="1">ATP-PRTase</shortName>
        <ecNumber evidence="1">2.4.2.17</ecNumber>
    </recommendedName>
</protein>
<keyword id="KW-0028">Amino-acid biosynthesis</keyword>
<keyword id="KW-0067">ATP-binding</keyword>
<keyword id="KW-0963">Cytoplasm</keyword>
<keyword id="KW-0328">Glycosyltransferase</keyword>
<keyword id="KW-0368">Histidine biosynthesis</keyword>
<keyword id="KW-0460">Magnesium</keyword>
<keyword id="KW-0479">Metal-binding</keyword>
<keyword id="KW-0547">Nucleotide-binding</keyword>
<keyword id="KW-1185">Reference proteome</keyword>
<keyword id="KW-0808">Transferase</keyword>
<name>HIS1_METMP</name>
<feature type="chain" id="PRO_0000151885" description="ATP phosphoribosyltransferase">
    <location>
        <begin position="1"/>
        <end position="288"/>
    </location>
</feature>